<reference key="1">
    <citation type="journal article" date="1992" name="J. Bacteriol.">
        <title>Nucleotide sequence and characterization of four additional genes of the hydrogenase structural operon from Rhizobium leguminosarum bv. viciae.</title>
        <authorList>
            <person name="Hidalgo E."/>
            <person name="Palacios J.M."/>
            <person name="Murillo J."/>
            <person name="Ruiz-Argueso T."/>
        </authorList>
    </citation>
    <scope>NUCLEOTIDE SEQUENCE [GENOMIC DNA]</scope>
    <source>
        <strain>UPM791</strain>
    </source>
</reference>
<reference key="2">
    <citation type="journal article" date="1997" name="Mol. Plant Microbe Interact.">
        <title>Organization of the hup-region and its differential transcription in non-symbiotic and symbiotic cells of Rhizobium leguminosarum bv. viciae B10.</title>
        <authorList>
            <person name="Brito B."/>
            <person name="Palacios J.M."/>
            <person name="Imperial J."/>
            <person name="Ruiz-Argueso T."/>
            <person name="Yang W.C."/>
            <person name="Bisseling T."/>
            <person name="Schmitt H."/>
            <person name="Kerl V."/>
            <person name="Bauer T."/>
            <person name="Kokotek W."/>
            <person name="Lotz W."/>
        </authorList>
    </citation>
    <scope>NUCLEOTIDE SEQUENCE [GENOMIC DNA]</scope>
    <source>
        <strain>B10</strain>
    </source>
</reference>
<feature type="signal peptide" evidence="1">
    <location>
        <begin position="1"/>
        <end position="21"/>
    </location>
</feature>
<feature type="chain" id="PRO_0000013608" description="Protein HupE">
    <location>
        <begin position="22"/>
        <end position="191"/>
    </location>
</feature>
<feature type="transmembrane region" description="Helical" evidence="1">
    <location>
        <begin position="38"/>
        <end position="58"/>
    </location>
</feature>
<feature type="transmembrane region" description="Helical" evidence="1">
    <location>
        <begin position="61"/>
        <end position="81"/>
    </location>
</feature>
<feature type="transmembrane region" description="Helical" evidence="1">
    <location>
        <begin position="84"/>
        <end position="104"/>
    </location>
</feature>
<feature type="transmembrane region" description="Helical" evidence="1">
    <location>
        <begin position="114"/>
        <end position="134"/>
    </location>
</feature>
<feature type="transmembrane region" description="Helical" evidence="1">
    <location>
        <begin position="144"/>
        <end position="164"/>
    </location>
</feature>
<feature type="transmembrane region" description="Helical" evidence="1">
    <location>
        <begin position="170"/>
        <end position="190"/>
    </location>
</feature>
<sequence>MKYSKITTTLAALALPSIAHAHVGLHADGTLAGLNHPFSGLDHILAMVAVGFWASTLGGKAVWIVPSAFVIVMAGGGVLGIEGIALPMVETAIALTVAMLGLLVAFEVKIPTPVAAIVVGICALFHGHVHGIELPTMSNATGYVAGFLAATVILHVLGIGLASLRFGKAGQVVARVAGGAVALAGAALLVG</sequence>
<protein>
    <recommendedName>
        <fullName>Protein HupE</fullName>
    </recommendedName>
</protein>
<accession>P27650</accession>
<name>HUPE_RHILV</name>
<comment type="function">
    <text>Needed for full hydrogenase activity.</text>
</comment>
<comment type="subcellular location">
    <subcellularLocation>
        <location>Cell inner membrane</location>
        <topology>Multi-pass membrane protein</topology>
    </subcellularLocation>
</comment>
<proteinExistence type="inferred from homology"/>
<evidence type="ECO:0000255" key="1"/>
<organism>
    <name type="scientific">Rhizobium leguminosarum bv. viciae</name>
    <dbReference type="NCBI Taxonomy" id="387"/>
    <lineage>
        <taxon>Bacteria</taxon>
        <taxon>Pseudomonadati</taxon>
        <taxon>Pseudomonadota</taxon>
        <taxon>Alphaproteobacteria</taxon>
        <taxon>Hyphomicrobiales</taxon>
        <taxon>Rhizobiaceae</taxon>
        <taxon>Rhizobium/Agrobacterium group</taxon>
        <taxon>Rhizobium</taxon>
    </lineage>
</organism>
<keyword id="KW-0997">Cell inner membrane</keyword>
<keyword id="KW-1003">Cell membrane</keyword>
<keyword id="KW-0472">Membrane</keyword>
<keyword id="KW-0732">Signal</keyword>
<keyword id="KW-0812">Transmembrane</keyword>
<keyword id="KW-1133">Transmembrane helix</keyword>
<gene>
    <name type="primary">hupE</name>
</gene>
<dbReference type="EMBL" id="X52974">
    <property type="protein sequence ID" value="CAA37152.1"/>
    <property type="molecule type" value="Genomic_DNA"/>
</dbReference>
<dbReference type="EMBL" id="Z36981">
    <property type="protein sequence ID" value="CAA85434.1"/>
    <property type="molecule type" value="Genomic_DNA"/>
</dbReference>
<dbReference type="PIR" id="C41892">
    <property type="entry name" value="C41892"/>
</dbReference>
<dbReference type="RefSeq" id="WP_018517049.1">
    <property type="nucleotide sequence ID" value="NZ_WIEJ01000010.1"/>
</dbReference>
<dbReference type="TCDB" id="2.A.99.1.1">
    <property type="family name" value="the 6tms ni(2+) uptake transporter (hupe-urej) family"/>
</dbReference>
<dbReference type="GO" id="GO:0005886">
    <property type="term" value="C:plasma membrane"/>
    <property type="evidence" value="ECO:0007669"/>
    <property type="project" value="UniProtKB-SubCell"/>
</dbReference>
<dbReference type="InterPro" id="IPR007038">
    <property type="entry name" value="HupE_UreJ"/>
</dbReference>
<dbReference type="Pfam" id="PF04955">
    <property type="entry name" value="HupE_UreJ"/>
    <property type="match status" value="1"/>
</dbReference>
<dbReference type="PIRSF" id="PIRSF016919">
    <property type="entry name" value="HupE_UreJ"/>
    <property type="match status" value="1"/>
</dbReference>